<evidence type="ECO:0000255" key="1">
    <source>
        <dbReference type="HAMAP-Rule" id="MF_01011"/>
    </source>
</evidence>
<organism>
    <name type="scientific">Photobacterium profundum (strain SS9)</name>
    <dbReference type="NCBI Taxonomy" id="298386"/>
    <lineage>
        <taxon>Bacteria</taxon>
        <taxon>Pseudomonadati</taxon>
        <taxon>Pseudomonadota</taxon>
        <taxon>Gammaproteobacteria</taxon>
        <taxon>Vibrionales</taxon>
        <taxon>Vibrionaceae</taxon>
        <taxon>Photobacterium</taxon>
    </lineage>
</organism>
<gene>
    <name evidence="1" type="primary">trmA</name>
    <name type="ordered locus">PBPRA3465</name>
</gene>
<protein>
    <recommendedName>
        <fullName evidence="1">tRNA/tmRNA (uracil-C(5))-methyltransferase</fullName>
        <ecNumber evidence="1">2.1.1.-</ecNumber>
        <ecNumber evidence="1">2.1.1.35</ecNumber>
    </recommendedName>
    <alternativeName>
        <fullName evidence="1">tRNA (uracil(54)-C(5))-methyltransferase</fullName>
    </alternativeName>
    <alternativeName>
        <fullName evidence="1">tRNA(m5U54)-methyltransferase</fullName>
        <shortName evidence="1">RUMT</shortName>
    </alternativeName>
    <alternativeName>
        <fullName evidence="1">tmRNA (uracil(341)-C(5))-methyltransferase</fullName>
    </alternativeName>
</protein>
<keyword id="KW-0489">Methyltransferase</keyword>
<keyword id="KW-1185">Reference proteome</keyword>
<keyword id="KW-0949">S-adenosyl-L-methionine</keyword>
<keyword id="KW-0808">Transferase</keyword>
<keyword id="KW-0819">tRNA processing</keyword>
<name>TRMA_PHOPR</name>
<accession>Q6LLU2</accession>
<proteinExistence type="inferred from homology"/>
<feature type="chain" id="PRO_0000161871" description="tRNA/tmRNA (uracil-C(5))-methyltransferase">
    <location>
        <begin position="1"/>
        <end position="368"/>
    </location>
</feature>
<feature type="active site" description="Nucleophile" evidence="1">
    <location>
        <position position="326"/>
    </location>
</feature>
<feature type="active site" description="Proton acceptor" evidence="1">
    <location>
        <position position="360"/>
    </location>
</feature>
<feature type="binding site" evidence="1">
    <location>
        <position position="190"/>
    </location>
    <ligand>
        <name>S-adenosyl-L-methionine</name>
        <dbReference type="ChEBI" id="CHEBI:59789"/>
    </ligand>
</feature>
<feature type="binding site" evidence="1">
    <location>
        <position position="218"/>
    </location>
    <ligand>
        <name>S-adenosyl-L-methionine</name>
        <dbReference type="ChEBI" id="CHEBI:59789"/>
    </ligand>
</feature>
<feature type="binding site" evidence="1">
    <location>
        <position position="223"/>
    </location>
    <ligand>
        <name>S-adenosyl-L-methionine</name>
        <dbReference type="ChEBI" id="CHEBI:59789"/>
    </ligand>
</feature>
<feature type="binding site" evidence="1">
    <location>
        <position position="239"/>
    </location>
    <ligand>
        <name>S-adenosyl-L-methionine</name>
        <dbReference type="ChEBI" id="CHEBI:59789"/>
    </ligand>
</feature>
<feature type="binding site" evidence="1">
    <location>
        <position position="301"/>
    </location>
    <ligand>
        <name>S-adenosyl-L-methionine</name>
        <dbReference type="ChEBI" id="CHEBI:59789"/>
    </ligand>
</feature>
<reference key="1">
    <citation type="journal article" date="2005" name="Science">
        <title>Life at depth: Photobacterium profundum genome sequence and expression analysis.</title>
        <authorList>
            <person name="Vezzi A."/>
            <person name="Campanaro S."/>
            <person name="D'Angelo M."/>
            <person name="Simonato F."/>
            <person name="Vitulo N."/>
            <person name="Lauro F.M."/>
            <person name="Cestaro A."/>
            <person name="Malacrida G."/>
            <person name="Simionati B."/>
            <person name="Cannata N."/>
            <person name="Romualdi C."/>
            <person name="Bartlett D.H."/>
            <person name="Valle G."/>
        </authorList>
    </citation>
    <scope>NUCLEOTIDE SEQUENCE [LARGE SCALE GENOMIC DNA]</scope>
    <source>
        <strain>ATCC BAA-1253 / SS9</strain>
    </source>
</reference>
<sequence length="368" mass="42758">MTSTALNTAGYQQQLDEKAERIQNIFEDFETPELEVFASPAEHYRMRAEFRMWHEGEDLYYVMFNQETREKYRVDQFPAASRLINDLMPLLVEALKPSQTLRHKLFQVDFLSTLSGEILVSLLYHRQLDEEWEVEIKKLKQCLNDEGFNLNIIGRARKMKIVADRDYVIEKLNVFDQTLTYKQVENSFTQPNGEVAQKMLEWAVDCTQDSDGDLLELYCGNGNFSLALAKNFERVLATELAKPSVESAQYNIAVNNIDNVQIVRMSAEDFTDAMAGKREFRRLKAQNVDLQSYNCNTIFVDPPRSGMDEGTCRMVQGYERIMYISCNPDTLKENLEILSQTHKITRFALFDQFPYTHHMEAGVLLERK</sequence>
<dbReference type="EC" id="2.1.1.-" evidence="1"/>
<dbReference type="EC" id="2.1.1.35" evidence="1"/>
<dbReference type="EMBL" id="CR378674">
    <property type="protein sequence ID" value="CAG21736.1"/>
    <property type="molecule type" value="Genomic_DNA"/>
</dbReference>
<dbReference type="RefSeq" id="WP_011219977.1">
    <property type="nucleotide sequence ID" value="NC_006370.1"/>
</dbReference>
<dbReference type="SMR" id="Q6LLU2"/>
<dbReference type="STRING" id="298386.PBPRA3465"/>
<dbReference type="KEGG" id="ppr:PBPRA3465"/>
<dbReference type="eggNOG" id="COG2265">
    <property type="taxonomic scope" value="Bacteria"/>
</dbReference>
<dbReference type="HOGENOM" id="CLU_043022_0_0_6"/>
<dbReference type="Proteomes" id="UP000000593">
    <property type="component" value="Chromosome 1"/>
</dbReference>
<dbReference type="GO" id="GO:0005829">
    <property type="term" value="C:cytosol"/>
    <property type="evidence" value="ECO:0007669"/>
    <property type="project" value="TreeGrafter"/>
</dbReference>
<dbReference type="GO" id="GO:0019843">
    <property type="term" value="F:rRNA binding"/>
    <property type="evidence" value="ECO:0007669"/>
    <property type="project" value="TreeGrafter"/>
</dbReference>
<dbReference type="GO" id="GO:0030697">
    <property type="term" value="F:tRNA (uracil(54)-C5)-methyltransferase activity, S-adenosyl methionine-dependent"/>
    <property type="evidence" value="ECO:0007669"/>
    <property type="project" value="UniProtKB-UniRule"/>
</dbReference>
<dbReference type="GO" id="GO:0000049">
    <property type="term" value="F:tRNA binding"/>
    <property type="evidence" value="ECO:0007669"/>
    <property type="project" value="TreeGrafter"/>
</dbReference>
<dbReference type="GO" id="GO:0030488">
    <property type="term" value="P:tRNA methylation"/>
    <property type="evidence" value="ECO:0007669"/>
    <property type="project" value="UniProtKB-UniRule"/>
</dbReference>
<dbReference type="CDD" id="cd02440">
    <property type="entry name" value="AdoMet_MTases"/>
    <property type="match status" value="1"/>
</dbReference>
<dbReference type="FunFam" id="2.40.50.1070:FF:000001">
    <property type="entry name" value="tRNA/tmRNA (uracil-C(5))-methyltransferase"/>
    <property type="match status" value="1"/>
</dbReference>
<dbReference type="FunFam" id="3.40.50.150:FF:000012">
    <property type="entry name" value="tRNA/tmRNA (uracil-C(5))-methyltransferase"/>
    <property type="match status" value="1"/>
</dbReference>
<dbReference type="Gene3D" id="2.40.50.1070">
    <property type="match status" value="1"/>
</dbReference>
<dbReference type="Gene3D" id="3.40.50.150">
    <property type="entry name" value="Vaccinia Virus protein VP39"/>
    <property type="match status" value="1"/>
</dbReference>
<dbReference type="HAMAP" id="MF_01011">
    <property type="entry name" value="RNA_methyltr_TrmA"/>
    <property type="match status" value="1"/>
</dbReference>
<dbReference type="InterPro" id="IPR030390">
    <property type="entry name" value="MeTrfase_TrmA_AS"/>
</dbReference>
<dbReference type="InterPro" id="IPR030391">
    <property type="entry name" value="MeTrfase_TrmA_CS"/>
</dbReference>
<dbReference type="InterPro" id="IPR029063">
    <property type="entry name" value="SAM-dependent_MTases_sf"/>
</dbReference>
<dbReference type="InterPro" id="IPR011869">
    <property type="entry name" value="TrmA_MeTrfase"/>
</dbReference>
<dbReference type="InterPro" id="IPR010280">
    <property type="entry name" value="U5_MeTrfase_fam"/>
</dbReference>
<dbReference type="NCBIfam" id="TIGR02143">
    <property type="entry name" value="trmA_only"/>
    <property type="match status" value="1"/>
</dbReference>
<dbReference type="PANTHER" id="PTHR47790">
    <property type="entry name" value="TRNA/TMRNA (URACIL-C(5))-METHYLTRANSFERASE"/>
    <property type="match status" value="1"/>
</dbReference>
<dbReference type="PANTHER" id="PTHR47790:SF2">
    <property type="entry name" value="TRNA_TMRNA (URACIL-C(5))-METHYLTRANSFERASE"/>
    <property type="match status" value="1"/>
</dbReference>
<dbReference type="Pfam" id="PF05958">
    <property type="entry name" value="tRNA_U5-meth_tr"/>
    <property type="match status" value="1"/>
</dbReference>
<dbReference type="SUPFAM" id="SSF53335">
    <property type="entry name" value="S-adenosyl-L-methionine-dependent methyltransferases"/>
    <property type="match status" value="1"/>
</dbReference>
<dbReference type="PROSITE" id="PS51687">
    <property type="entry name" value="SAM_MT_RNA_M5U"/>
    <property type="match status" value="1"/>
</dbReference>
<dbReference type="PROSITE" id="PS01230">
    <property type="entry name" value="TRMA_1"/>
    <property type="match status" value="1"/>
</dbReference>
<dbReference type="PROSITE" id="PS01231">
    <property type="entry name" value="TRMA_2"/>
    <property type="match status" value="1"/>
</dbReference>
<comment type="function">
    <text evidence="1">Dual-specificity methyltransferase that catalyzes the formation of 5-methyluridine at position 54 (m5U54) in all tRNAs, and that of position 341 (m5U341) in tmRNA (transfer-mRNA).</text>
</comment>
<comment type="catalytic activity">
    <reaction evidence="1">
        <text>uridine(54) in tRNA + S-adenosyl-L-methionine = 5-methyluridine(54) in tRNA + S-adenosyl-L-homocysteine + H(+)</text>
        <dbReference type="Rhea" id="RHEA:42712"/>
        <dbReference type="Rhea" id="RHEA-COMP:10167"/>
        <dbReference type="Rhea" id="RHEA-COMP:10193"/>
        <dbReference type="ChEBI" id="CHEBI:15378"/>
        <dbReference type="ChEBI" id="CHEBI:57856"/>
        <dbReference type="ChEBI" id="CHEBI:59789"/>
        <dbReference type="ChEBI" id="CHEBI:65315"/>
        <dbReference type="ChEBI" id="CHEBI:74447"/>
        <dbReference type="EC" id="2.1.1.35"/>
    </reaction>
</comment>
<comment type="catalytic activity">
    <reaction evidence="1">
        <text>uridine(341) in tmRNA + S-adenosyl-L-methionine = 5-methyluridine(341) in tmRNA + S-adenosyl-L-homocysteine + H(+)</text>
        <dbReference type="Rhea" id="RHEA:43612"/>
        <dbReference type="Rhea" id="RHEA-COMP:10630"/>
        <dbReference type="Rhea" id="RHEA-COMP:10631"/>
        <dbReference type="ChEBI" id="CHEBI:15378"/>
        <dbReference type="ChEBI" id="CHEBI:57856"/>
        <dbReference type="ChEBI" id="CHEBI:59789"/>
        <dbReference type="ChEBI" id="CHEBI:65315"/>
        <dbReference type="ChEBI" id="CHEBI:74447"/>
    </reaction>
</comment>
<comment type="similarity">
    <text evidence="1">Belongs to the class I-like SAM-binding methyltransferase superfamily. RNA M5U methyltransferase family. TrmA subfamily.</text>
</comment>